<name>PSRP_ECOBW</name>
<dbReference type="EC" id="2.7.11.33" evidence="1"/>
<dbReference type="EC" id="2.7.4.28" evidence="1"/>
<dbReference type="EMBL" id="CP001396">
    <property type="protein sequence ID" value="ACR62483.1"/>
    <property type="molecule type" value="Genomic_DNA"/>
</dbReference>
<dbReference type="RefSeq" id="WP_000368046.1">
    <property type="nucleotide sequence ID" value="NC_012759.1"/>
</dbReference>
<dbReference type="SMR" id="C4ZYG5"/>
<dbReference type="GeneID" id="93775866"/>
<dbReference type="KEGG" id="ebw:BWG_1517"/>
<dbReference type="HOGENOM" id="CLU_046206_1_0_6"/>
<dbReference type="GO" id="GO:0043531">
    <property type="term" value="F:ADP binding"/>
    <property type="evidence" value="ECO:0007669"/>
    <property type="project" value="UniProtKB-UniRule"/>
</dbReference>
<dbReference type="GO" id="GO:0005524">
    <property type="term" value="F:ATP binding"/>
    <property type="evidence" value="ECO:0007669"/>
    <property type="project" value="InterPro"/>
</dbReference>
<dbReference type="GO" id="GO:0016776">
    <property type="term" value="F:phosphotransferase activity, phosphate group as acceptor"/>
    <property type="evidence" value="ECO:0007669"/>
    <property type="project" value="UniProtKB-UniRule"/>
</dbReference>
<dbReference type="GO" id="GO:0004674">
    <property type="term" value="F:protein serine/threonine kinase activity"/>
    <property type="evidence" value="ECO:0007669"/>
    <property type="project" value="UniProtKB-UniRule"/>
</dbReference>
<dbReference type="HAMAP" id="MF_01062">
    <property type="entry name" value="PSRP"/>
    <property type="match status" value="1"/>
</dbReference>
<dbReference type="InterPro" id="IPR005177">
    <property type="entry name" value="Kinase-pyrophosphorylase"/>
</dbReference>
<dbReference type="InterPro" id="IPR026530">
    <property type="entry name" value="PSRP"/>
</dbReference>
<dbReference type="NCBIfam" id="NF003742">
    <property type="entry name" value="PRK05339.1"/>
    <property type="match status" value="1"/>
</dbReference>
<dbReference type="PANTHER" id="PTHR31756">
    <property type="entry name" value="PYRUVATE, PHOSPHATE DIKINASE REGULATORY PROTEIN 1, CHLOROPLASTIC"/>
    <property type="match status" value="1"/>
</dbReference>
<dbReference type="PANTHER" id="PTHR31756:SF3">
    <property type="entry name" value="PYRUVATE, PHOSPHATE DIKINASE REGULATORY PROTEIN 1, CHLOROPLASTIC"/>
    <property type="match status" value="1"/>
</dbReference>
<dbReference type="Pfam" id="PF03618">
    <property type="entry name" value="Kinase-PPPase"/>
    <property type="match status" value="1"/>
</dbReference>
<sequence>MDNAVDRHVFYISDGTAITAEVLGHAVMSQFPVTISSITLPFVENESRARAVKDQIDAIYHQTGVRPLVFYSIVLPEIRAIILQSEGFCQDIVQALVAPLQQEMKLDPTPIAHRTHGLNPNNLNKYDARIAAIDYTLAHDDGISLRNLDQAQVILLGVSRCGKTPTSLYLAMQFGIRAANYPFIADDMDNLVLPASLKPLQHKLFGLTIDPERLAAIREERRENSRYASLRQCRMEVAEVEALYRKNQIPWINSTNYSVEEIATKILDIMGLSRRMY</sequence>
<gene>
    <name evidence="1" type="primary">ppsR</name>
    <name type="ordered locus">BWG_1517</name>
</gene>
<protein>
    <recommendedName>
        <fullName evidence="1">Phosphoenolpyruvate synthase regulatory protein</fullName>
        <shortName evidence="1">PEP synthase regulatory protein</shortName>
        <shortName evidence="1">PSRP</shortName>
        <ecNumber evidence="1">2.7.11.33</ecNumber>
        <ecNumber evidence="1">2.7.4.28</ecNumber>
    </recommendedName>
    <alternativeName>
        <fullName evidence="1">Pyruvate, water dikinase regulatory protein</fullName>
    </alternativeName>
</protein>
<evidence type="ECO:0000255" key="1">
    <source>
        <dbReference type="HAMAP-Rule" id="MF_01062"/>
    </source>
</evidence>
<keyword id="KW-0418">Kinase</keyword>
<keyword id="KW-0547">Nucleotide-binding</keyword>
<keyword id="KW-0723">Serine/threonine-protein kinase</keyword>
<keyword id="KW-0808">Transferase</keyword>
<proteinExistence type="inferred from homology"/>
<organism>
    <name type="scientific">Escherichia coli (strain K12 / MC4100 / BW2952)</name>
    <dbReference type="NCBI Taxonomy" id="595496"/>
    <lineage>
        <taxon>Bacteria</taxon>
        <taxon>Pseudomonadati</taxon>
        <taxon>Pseudomonadota</taxon>
        <taxon>Gammaproteobacteria</taxon>
        <taxon>Enterobacterales</taxon>
        <taxon>Enterobacteriaceae</taxon>
        <taxon>Escherichia</taxon>
    </lineage>
</organism>
<accession>C4ZYG5</accession>
<feature type="chain" id="PRO_1000213451" description="Phosphoenolpyruvate synthase regulatory protein">
    <location>
        <begin position="1"/>
        <end position="277"/>
    </location>
</feature>
<feature type="binding site" evidence="1">
    <location>
        <begin position="157"/>
        <end position="164"/>
    </location>
    <ligand>
        <name>ADP</name>
        <dbReference type="ChEBI" id="CHEBI:456216"/>
    </ligand>
</feature>
<comment type="function">
    <text evidence="1">Bifunctional serine/threonine kinase and phosphorylase involved in the regulation of the phosphoenolpyruvate synthase (PEPS) by catalyzing its phosphorylation/dephosphorylation.</text>
</comment>
<comment type="catalytic activity">
    <reaction evidence="1">
        <text>[pyruvate, water dikinase] + ADP = [pyruvate, water dikinase]-phosphate + AMP + H(+)</text>
        <dbReference type="Rhea" id="RHEA:46020"/>
        <dbReference type="Rhea" id="RHEA-COMP:11425"/>
        <dbReference type="Rhea" id="RHEA-COMP:11426"/>
        <dbReference type="ChEBI" id="CHEBI:15378"/>
        <dbReference type="ChEBI" id="CHEBI:43176"/>
        <dbReference type="ChEBI" id="CHEBI:68546"/>
        <dbReference type="ChEBI" id="CHEBI:456215"/>
        <dbReference type="ChEBI" id="CHEBI:456216"/>
        <dbReference type="EC" id="2.7.11.33"/>
    </reaction>
</comment>
<comment type="catalytic activity">
    <reaction evidence="1">
        <text>[pyruvate, water dikinase]-phosphate + phosphate + H(+) = [pyruvate, water dikinase] + diphosphate</text>
        <dbReference type="Rhea" id="RHEA:48580"/>
        <dbReference type="Rhea" id="RHEA-COMP:11425"/>
        <dbReference type="Rhea" id="RHEA-COMP:11426"/>
        <dbReference type="ChEBI" id="CHEBI:15378"/>
        <dbReference type="ChEBI" id="CHEBI:33019"/>
        <dbReference type="ChEBI" id="CHEBI:43176"/>
        <dbReference type="ChEBI" id="CHEBI:43474"/>
        <dbReference type="ChEBI" id="CHEBI:68546"/>
        <dbReference type="EC" id="2.7.4.28"/>
    </reaction>
</comment>
<comment type="similarity">
    <text evidence="1">Belongs to the pyruvate, phosphate/water dikinase regulatory protein family. PSRP subfamily.</text>
</comment>
<reference key="1">
    <citation type="journal article" date="2009" name="J. Bacteriol.">
        <title>Genomic sequencing reveals regulatory mutations and recombinational events in the widely used MC4100 lineage of Escherichia coli K-12.</title>
        <authorList>
            <person name="Ferenci T."/>
            <person name="Zhou Z."/>
            <person name="Betteridge T."/>
            <person name="Ren Y."/>
            <person name="Liu Y."/>
            <person name="Feng L."/>
            <person name="Reeves P.R."/>
            <person name="Wang L."/>
        </authorList>
    </citation>
    <scope>NUCLEOTIDE SEQUENCE [LARGE SCALE GENOMIC DNA]</scope>
    <source>
        <strain>K12 / MC4100 / BW2952</strain>
    </source>
</reference>